<protein>
    <recommendedName>
        <fullName evidence="1">UPF0312 protein Shewana3_1179</fullName>
    </recommendedName>
</protein>
<sequence length="191" mass="20297">MKKQLLAALIGGSLLAPMAASAADYVIDREGAHASITFKVSHLGYSYVVGRFNDFSGDFSYDAKNPTAAKVNVKVNTLSVDSNHAERDKHIRSGDFLNTAKFAEATFVSTSVEDKGNGDMVITGNFTLNGVTKPLAIQAHAVGEGQDPWGGYRAGFTGTTTFAMKDYGIKMDLGPASANVELDLVVEGVRK</sequence>
<evidence type="ECO:0000255" key="1">
    <source>
        <dbReference type="HAMAP-Rule" id="MF_00780"/>
    </source>
</evidence>
<name>Y1179_SHESA</name>
<feature type="signal peptide" evidence="1">
    <location>
        <begin position="1"/>
        <end position="22"/>
    </location>
</feature>
<feature type="chain" id="PRO_1000046826" description="UPF0312 protein Shewana3_1179">
    <location>
        <begin position="23"/>
        <end position="191"/>
    </location>
</feature>
<organism>
    <name type="scientific">Shewanella sp. (strain ANA-3)</name>
    <dbReference type="NCBI Taxonomy" id="94122"/>
    <lineage>
        <taxon>Bacteria</taxon>
        <taxon>Pseudomonadati</taxon>
        <taxon>Pseudomonadota</taxon>
        <taxon>Gammaproteobacteria</taxon>
        <taxon>Alteromonadales</taxon>
        <taxon>Shewanellaceae</taxon>
        <taxon>Shewanella</taxon>
    </lineage>
</organism>
<proteinExistence type="inferred from homology"/>
<reference key="1">
    <citation type="submission" date="2006-09" db="EMBL/GenBank/DDBJ databases">
        <title>Complete sequence of chromosome 1 of Shewanella sp. ANA-3.</title>
        <authorList>
            <person name="Copeland A."/>
            <person name="Lucas S."/>
            <person name="Lapidus A."/>
            <person name="Barry K."/>
            <person name="Detter J.C."/>
            <person name="Glavina del Rio T."/>
            <person name="Hammon N."/>
            <person name="Israni S."/>
            <person name="Dalin E."/>
            <person name="Tice H."/>
            <person name="Pitluck S."/>
            <person name="Chertkov O."/>
            <person name="Brettin T."/>
            <person name="Bruce D."/>
            <person name="Han C."/>
            <person name="Tapia R."/>
            <person name="Gilna P."/>
            <person name="Schmutz J."/>
            <person name="Larimer F."/>
            <person name="Land M."/>
            <person name="Hauser L."/>
            <person name="Kyrpides N."/>
            <person name="Kim E."/>
            <person name="Newman D."/>
            <person name="Salticov C."/>
            <person name="Konstantinidis K."/>
            <person name="Klappenback J."/>
            <person name="Tiedje J."/>
            <person name="Richardson P."/>
        </authorList>
    </citation>
    <scope>NUCLEOTIDE SEQUENCE [LARGE SCALE GENOMIC DNA]</scope>
    <source>
        <strain>ANA-3</strain>
    </source>
</reference>
<keyword id="KW-0574">Periplasm</keyword>
<keyword id="KW-0732">Signal</keyword>
<accession>A0KUE5</accession>
<gene>
    <name type="ordered locus">Shewana3_1179</name>
</gene>
<dbReference type="EMBL" id="CP000469">
    <property type="protein sequence ID" value="ABK47414.1"/>
    <property type="molecule type" value="Genomic_DNA"/>
</dbReference>
<dbReference type="RefSeq" id="WP_011716272.1">
    <property type="nucleotide sequence ID" value="NC_008577.1"/>
</dbReference>
<dbReference type="SMR" id="A0KUE5"/>
<dbReference type="STRING" id="94122.Shewana3_1179"/>
<dbReference type="KEGG" id="shn:Shewana3_1179"/>
<dbReference type="eggNOG" id="COG2353">
    <property type="taxonomic scope" value="Bacteria"/>
</dbReference>
<dbReference type="HOGENOM" id="CLU_071003_1_2_6"/>
<dbReference type="OrthoDB" id="9811006at2"/>
<dbReference type="Proteomes" id="UP000002589">
    <property type="component" value="Chromosome"/>
</dbReference>
<dbReference type="GO" id="GO:0042597">
    <property type="term" value="C:periplasmic space"/>
    <property type="evidence" value="ECO:0007669"/>
    <property type="project" value="UniProtKB-SubCell"/>
</dbReference>
<dbReference type="Gene3D" id="2.40.128.110">
    <property type="entry name" value="Lipid/polyisoprenoid-binding, YceI-like"/>
    <property type="match status" value="1"/>
</dbReference>
<dbReference type="HAMAP" id="MF_00780">
    <property type="entry name" value="UPF0312"/>
    <property type="match status" value="1"/>
</dbReference>
<dbReference type="InterPro" id="IPR007372">
    <property type="entry name" value="Lipid/polyisoprenoid-bd_YceI"/>
</dbReference>
<dbReference type="InterPro" id="IPR036761">
    <property type="entry name" value="TTHA0802/YceI-like_sf"/>
</dbReference>
<dbReference type="InterPro" id="IPR023480">
    <property type="entry name" value="UPF0312/YceI"/>
</dbReference>
<dbReference type="NCBIfam" id="NF002994">
    <property type="entry name" value="PRK03757.1"/>
    <property type="match status" value="1"/>
</dbReference>
<dbReference type="PANTHER" id="PTHR34406">
    <property type="entry name" value="PROTEIN YCEI"/>
    <property type="match status" value="1"/>
</dbReference>
<dbReference type="PANTHER" id="PTHR34406:SF1">
    <property type="entry name" value="PROTEIN YCEI"/>
    <property type="match status" value="1"/>
</dbReference>
<dbReference type="Pfam" id="PF04264">
    <property type="entry name" value="YceI"/>
    <property type="match status" value="1"/>
</dbReference>
<dbReference type="SMART" id="SM00867">
    <property type="entry name" value="YceI"/>
    <property type="match status" value="1"/>
</dbReference>
<dbReference type="SUPFAM" id="SSF101874">
    <property type="entry name" value="YceI-like"/>
    <property type="match status" value="1"/>
</dbReference>
<comment type="subcellular location">
    <subcellularLocation>
        <location evidence="1">Periplasm</location>
    </subcellularLocation>
</comment>
<comment type="similarity">
    <text evidence="1">Belongs to the UPF0312 family. Type 1 subfamily.</text>
</comment>